<name>PABP2_DROME</name>
<evidence type="ECO:0000250" key="1">
    <source>
        <dbReference type="UniProtKB" id="Q28165"/>
    </source>
</evidence>
<evidence type="ECO:0000255" key="2"/>
<evidence type="ECO:0000255" key="3">
    <source>
        <dbReference type="PROSITE-ProRule" id="PRU00176"/>
    </source>
</evidence>
<evidence type="ECO:0000256" key="4">
    <source>
        <dbReference type="SAM" id="MobiDB-lite"/>
    </source>
</evidence>
<evidence type="ECO:0000269" key="5">
    <source>
    </source>
</evidence>
<evidence type="ECO:0000269" key="6">
    <source>
    </source>
</evidence>
<evidence type="ECO:0000269" key="7">
    <source>
    </source>
</evidence>
<evidence type="ECO:0000269" key="8">
    <source>
    </source>
</evidence>
<evidence type="ECO:0000269" key="9">
    <source>
    </source>
</evidence>
<evidence type="ECO:0000269" key="10">
    <source>
    </source>
</evidence>
<evidence type="ECO:0000269" key="11">
    <source>
    </source>
</evidence>
<evidence type="ECO:0000303" key="12">
    <source>
    </source>
</evidence>
<evidence type="ECO:0000303" key="13">
    <source>
    </source>
</evidence>
<evidence type="ECO:0000305" key="14"/>
<evidence type="ECO:0000312" key="15">
    <source>
        <dbReference type="EMBL" id="AAA73522.1"/>
    </source>
</evidence>
<evidence type="ECO:0000312" key="16">
    <source>
        <dbReference type="EMBL" id="AAF00976.1"/>
    </source>
</evidence>
<evidence type="ECO:0000312" key="17">
    <source>
        <dbReference type="EMBL" id="AAL48102.1"/>
    </source>
</evidence>
<evidence type="ECO:0000312" key="18">
    <source>
        <dbReference type="FlyBase" id="FBgn0005648"/>
    </source>
</evidence>
<evidence type="ECO:0000312" key="19">
    <source>
        <dbReference type="Proteomes" id="UP000000803"/>
    </source>
</evidence>
<gene>
    <name evidence="18" type="primary">Pabp2</name>
    <name evidence="12 13" type="synonym">rox2</name>
    <name evidence="18" type="ORF">CG2163</name>
</gene>
<sequence length="224" mass="24978">MADEDITLNEDQLLESLEETNGEQETEIATEVEEEGSMQIDPELEAIKARVKEMEEEAEKIKQMQSEVDKQMAGGSTTGLATVPLSLEEKQEIDTRSVYVGNVDYGASAEELEAHFHGCGTINRVTILCNKADGHPKGFAYIEFGSKEFVETALAMNETLFRGRQIKVMSKRTNRPGLSTTNRFARGSFRGRGARVSRACCHSTFRGARRAMGYRGRANYYAPY</sequence>
<dbReference type="EMBL" id="L23873">
    <property type="protein sequence ID" value="AAA28862.1"/>
    <property type="molecule type" value="mRNA"/>
</dbReference>
<dbReference type="EMBL" id="L34934">
    <property type="protein sequence ID" value="AAA73522.1"/>
    <property type="molecule type" value="mRNA"/>
</dbReference>
<dbReference type="EMBL" id="AF116341">
    <property type="protein sequence ID" value="AAF00976.1"/>
    <property type="molecule type" value="Genomic_DNA"/>
</dbReference>
<dbReference type="EMBL" id="AE013599">
    <property type="protein sequence ID" value="AAF59127.1"/>
    <property type="molecule type" value="Genomic_DNA"/>
</dbReference>
<dbReference type="EMBL" id="AY070631">
    <property type="protein sequence ID" value="AAL48102.1"/>
    <property type="molecule type" value="mRNA"/>
</dbReference>
<dbReference type="EMBL" id="AY075519">
    <property type="protein sequence ID" value="AAL68327.1"/>
    <property type="molecule type" value="mRNA"/>
</dbReference>
<dbReference type="RefSeq" id="NP_476902.1">
    <property type="nucleotide sequence ID" value="NM_057554.4"/>
</dbReference>
<dbReference type="RefSeq" id="NP_724648.1">
    <property type="nucleotide sequence ID" value="NM_165589.3"/>
</dbReference>
<dbReference type="SMR" id="Q7KNF2"/>
<dbReference type="BioGRID" id="61644">
    <property type="interactions" value="15"/>
</dbReference>
<dbReference type="FunCoup" id="Q7KNF2">
    <property type="interactions" value="2446"/>
</dbReference>
<dbReference type="IntAct" id="Q7KNF2">
    <property type="interactions" value="3"/>
</dbReference>
<dbReference type="STRING" id="7227.FBpp0087863"/>
<dbReference type="PaxDb" id="7227-FBpp0087863"/>
<dbReference type="ABCD" id="Q7KNF2">
    <property type="antibodies" value="3 sequenced antibodies"/>
</dbReference>
<dbReference type="DNASU" id="35788"/>
<dbReference type="EnsemblMetazoa" id="FBtr0088785">
    <property type="protein sequence ID" value="FBpp0087863"/>
    <property type="gene ID" value="FBgn0005648"/>
</dbReference>
<dbReference type="EnsemblMetazoa" id="FBtr0088786">
    <property type="protein sequence ID" value="FBpp0087864"/>
    <property type="gene ID" value="FBgn0005648"/>
</dbReference>
<dbReference type="GeneID" id="35788"/>
<dbReference type="KEGG" id="dme:Dmel_CG2163"/>
<dbReference type="AGR" id="FB:FBgn0005648"/>
<dbReference type="CTD" id="35788"/>
<dbReference type="FlyBase" id="FBgn0005648">
    <property type="gene designation" value="Pabp2"/>
</dbReference>
<dbReference type="VEuPathDB" id="VectorBase:FBgn0005648"/>
<dbReference type="eggNOG" id="KOG4209">
    <property type="taxonomic scope" value="Eukaryota"/>
</dbReference>
<dbReference type="GeneTree" id="ENSGT00940000154606"/>
<dbReference type="HOGENOM" id="CLU_012062_23_3_1"/>
<dbReference type="InParanoid" id="Q7KNF2"/>
<dbReference type="OMA" id="YRGRATY"/>
<dbReference type="OrthoDB" id="4726at2759"/>
<dbReference type="PhylomeDB" id="Q7KNF2"/>
<dbReference type="Reactome" id="R-DME-72187">
    <property type="pathway name" value="mRNA 3'-end processing"/>
</dbReference>
<dbReference type="Reactome" id="R-DME-72203">
    <property type="pathway name" value="Processing of Capped Intron-Containing Pre-mRNA"/>
</dbReference>
<dbReference type="Reactome" id="R-DME-73856">
    <property type="pathway name" value="RNA Polymerase II Transcription Termination"/>
</dbReference>
<dbReference type="Reactome" id="R-DME-77595">
    <property type="pathway name" value="Processing of Intronless Pre-mRNAs"/>
</dbReference>
<dbReference type="SignaLink" id="Q7KNF2"/>
<dbReference type="BioGRID-ORCS" id="35788">
    <property type="hits" value="1 hit in 3 CRISPR screens"/>
</dbReference>
<dbReference type="ChiTaRS" id="Pabp2">
    <property type="organism name" value="fly"/>
</dbReference>
<dbReference type="GenomeRNAi" id="35788"/>
<dbReference type="PRO" id="PR:Q7KNF2"/>
<dbReference type="Proteomes" id="UP000000803">
    <property type="component" value="Chromosome 2R"/>
</dbReference>
<dbReference type="Bgee" id="FBgn0005648">
    <property type="expression patterns" value="Expressed in T neuron T5a (Drosophila) in embryonic/larval optic lobe (Drosophila) and 213 other cell types or tissues"/>
</dbReference>
<dbReference type="ExpressionAtlas" id="Q7KNF2">
    <property type="expression patterns" value="baseline and differential"/>
</dbReference>
<dbReference type="GO" id="GO:0071013">
    <property type="term" value="C:catalytic step 2 spliceosome"/>
    <property type="evidence" value="ECO:0007005"/>
    <property type="project" value="FlyBase"/>
</dbReference>
<dbReference type="GO" id="GO:0005737">
    <property type="term" value="C:cytoplasm"/>
    <property type="evidence" value="ECO:0000314"/>
    <property type="project" value="UniProtKB"/>
</dbReference>
<dbReference type="GO" id="GO:0005829">
    <property type="term" value="C:cytosol"/>
    <property type="evidence" value="ECO:0000314"/>
    <property type="project" value="FlyBase"/>
</dbReference>
<dbReference type="GO" id="GO:0005634">
    <property type="term" value="C:nucleus"/>
    <property type="evidence" value="ECO:0000314"/>
    <property type="project" value="UniProtKB"/>
</dbReference>
<dbReference type="GO" id="GO:0071011">
    <property type="term" value="C:precatalytic spliceosome"/>
    <property type="evidence" value="ECO:0007005"/>
    <property type="project" value="FlyBase"/>
</dbReference>
<dbReference type="GO" id="GO:0008143">
    <property type="term" value="F:poly(A) binding"/>
    <property type="evidence" value="ECO:0000314"/>
    <property type="project" value="UniProtKB"/>
</dbReference>
<dbReference type="GO" id="GO:0003723">
    <property type="term" value="F:RNA binding"/>
    <property type="evidence" value="ECO:0000314"/>
    <property type="project" value="UniProtKB"/>
</dbReference>
<dbReference type="GO" id="GO:0180010">
    <property type="term" value="P:co-transcriptional mRNA 3'-end processing, cleavage and polyadenylation pathway"/>
    <property type="evidence" value="ECO:0000315"/>
    <property type="project" value="FlyBase"/>
</dbReference>
<dbReference type="GO" id="GO:0031124">
    <property type="term" value="P:mRNA 3'-end processing"/>
    <property type="evidence" value="ECO:0000314"/>
    <property type="project" value="UniProtKB"/>
</dbReference>
<dbReference type="GO" id="GO:0000398">
    <property type="term" value="P:mRNA splicing, via spliceosome"/>
    <property type="evidence" value="ECO:0000305"/>
    <property type="project" value="FlyBase"/>
</dbReference>
<dbReference type="GO" id="GO:0000289">
    <property type="term" value="P:nuclear-transcribed mRNA poly(A) tail shortening"/>
    <property type="evidence" value="ECO:0000315"/>
    <property type="project" value="FlyBase"/>
</dbReference>
<dbReference type="CDD" id="cd12550">
    <property type="entry name" value="RRM_II_PABPN1"/>
    <property type="match status" value="1"/>
</dbReference>
<dbReference type="FunFam" id="3.30.70.330:FF:000543">
    <property type="entry name" value="Pabp2, isoform B"/>
    <property type="match status" value="1"/>
</dbReference>
<dbReference type="Gene3D" id="3.30.70.330">
    <property type="match status" value="1"/>
</dbReference>
<dbReference type="InterPro" id="IPR012677">
    <property type="entry name" value="Nucleotide-bd_a/b_plait_sf"/>
</dbReference>
<dbReference type="InterPro" id="IPR035979">
    <property type="entry name" value="RBD_domain_sf"/>
</dbReference>
<dbReference type="InterPro" id="IPR000504">
    <property type="entry name" value="RRM_dom"/>
</dbReference>
<dbReference type="PANTHER" id="PTHR23236:SF12">
    <property type="entry name" value="EUKARYOTIC INITIATION FACTOR 4B-RELATED"/>
    <property type="match status" value="1"/>
</dbReference>
<dbReference type="PANTHER" id="PTHR23236">
    <property type="entry name" value="EUKARYOTIC TRANSLATION INITIATION FACTOR 4B/4H"/>
    <property type="match status" value="1"/>
</dbReference>
<dbReference type="Pfam" id="PF00076">
    <property type="entry name" value="RRM_1"/>
    <property type="match status" value="1"/>
</dbReference>
<dbReference type="SMART" id="SM00360">
    <property type="entry name" value="RRM"/>
    <property type="match status" value="1"/>
</dbReference>
<dbReference type="SUPFAM" id="SSF54928">
    <property type="entry name" value="RNA-binding domain, RBD"/>
    <property type="match status" value="1"/>
</dbReference>
<dbReference type="PROSITE" id="PS50102">
    <property type="entry name" value="RRM"/>
    <property type="match status" value="1"/>
</dbReference>
<feature type="chain" id="PRO_0000252085" description="Polyadenylate-binding protein 2">
    <location>
        <begin position="1"/>
        <end position="224"/>
    </location>
</feature>
<feature type="domain" description="RRM" evidence="3">
    <location>
        <begin position="96"/>
        <end position="173"/>
    </location>
</feature>
<feature type="region of interest" description="Disordered" evidence="4">
    <location>
        <begin position="1"/>
        <end position="40"/>
    </location>
</feature>
<feature type="coiled-coil region" evidence="2">
    <location>
        <begin position="9"/>
        <end position="74"/>
    </location>
</feature>
<feature type="compositionally biased region" description="Acidic residues" evidence="4">
    <location>
        <begin position="1"/>
        <end position="36"/>
    </location>
</feature>
<feature type="sequence conflict" description="In Ref. 1; AAA73522." evidence="14" ref="1">
    <original>A</original>
    <variation>R</variation>
    <location>
        <position position="73"/>
    </location>
</feature>
<comment type="function">
    <text evidence="1 5 9 10">Involved in the 3'-end formation of mRNA precursors (pre-mRNA) by the addition of a poly(A) tail of 200-250 nt to the upstream cleavage product (PubMed:10481015). Stimulates poly(A) polymerase (PAPOLA) conferring processivity on the poly(A) tail elongation reaction and also controls the poly(A) tail length (By similarity). Increases the affinity of poly(A) polymerase for RNA (By similarity). Binds to poly(A) and to poly(G) with high affinity (PubMed:10481015). May protect the poly(A) tail from degradation (By similarity). Plays a role in the positive regulation of alpha-1,3 fucosylation, possibly by cooperating with swm which regulates nuclear export of fucosyltransferase FucTA (PubMed:21203496). Involved in germline stem cell transit amplification, differentiation and mitosis-to-meiosis transition (PubMed:28190776).</text>
</comment>
<comment type="subunit">
    <text evidence="8">Interacts with ZC3H3.</text>
</comment>
<comment type="subcellular location">
    <subcellularLocation>
        <location evidence="5">Nucleus</location>
    </subcellularLocation>
    <subcellularLocation>
        <location evidence="5">Cytoplasm</location>
    </subcellularLocation>
    <text>Shuttles between the nucleus and the cytoplasm but predominantly found in the nucleus. Mostly found in the nucleus in the germarium. From egg chamber formation onwards, expressed in both the nuclei and cytoplasm of nurse cells and the oocyte. At stage 10, abundant in the nuclei of nurse cells, oocyte and follicle cells and in the cytoplasm of nurse cells. Uniformly distributed in the cytoplasm of early embryos then progressively localizes to nuclei during the pre-blastoderm and syncytial blastoderm stages. After cellularization, localizes mainly to the nucleus and remains nuclear in later embryonic and larval stages. During mitosis, expression levels are reduced in prophase nuclei and expression is localized to the cytoplasm during metaphase. Localizes to nuclear speckles.</text>
</comment>
<comment type="tissue specificity">
    <text evidence="5">Expressed ubiquitously in all transcriptionally active cells.</text>
</comment>
<comment type="developmental stage">
    <text evidence="5">Expressed both maternally and zygotically. Expressed in all developmental stages; egg, embryo, larva, pupa and in both adult males and females.</text>
</comment>
<comment type="domain">
    <text evidence="1">The RRM domain is essential for specific adenine bases recognition in the poly(A) tail but not sufficient for poly(A) binding.</text>
</comment>
<comment type="disruption phenotype">
    <text evidence="9 10">RNAi-mediated knockdown results in reduced alpha-1,3-fucosylation of chp (PubMed:21203496). RNAi-mediated knockdown results in overproliferation of testicular cystocytes undergoing transit amplification leading to increased incidence of spermatogonial tumors (PubMed:28190776).</text>
</comment>
<protein>
    <recommendedName>
        <fullName>Polyadenylate-binding protein 2</fullName>
        <shortName>PABP-2</shortName>
        <shortName>Poly(A)-binding protein 2</shortName>
        <shortName>dPABP2</shortName>
    </recommendedName>
    <alternativeName>
        <fullName>Nuclear poly(A)-binding protein 1</fullName>
    </alternativeName>
    <alternativeName>
        <fullName>Poly(A)-binding protein II</fullName>
        <shortName>PABII</shortName>
    </alternativeName>
    <alternativeName>
        <fullName>Polyadenylate-binding nuclear protein 1</fullName>
    </alternativeName>
    <alternativeName>
        <fullName>Protein rox2</fullName>
    </alternativeName>
</protein>
<proteinExistence type="evidence at protein level"/>
<keyword id="KW-0175">Coiled coil</keyword>
<keyword id="KW-0963">Cytoplasm</keyword>
<keyword id="KW-0507">mRNA processing</keyword>
<keyword id="KW-0539">Nucleus</keyword>
<keyword id="KW-1185">Reference proteome</keyword>
<keyword id="KW-0694">RNA-binding</keyword>
<reference evidence="14 15" key="1">
    <citation type="journal article" date="1995" name="Gene">
        <title>Novel Drosophila melanogaster genes encoding RRM-type RNA-binding proteins identified by a degenerate PCR strategy.</title>
        <authorList>
            <person name="Brand S.F."/>
            <person name="Pichoff S."/>
            <person name="Noselli S."/>
            <person name="Bourbon H.-M."/>
        </authorList>
    </citation>
    <scope>NUCLEOTIDE SEQUENCE [MRNA]</scope>
    <source>
        <tissue evidence="11">Embryo</tissue>
    </source>
</reference>
<reference evidence="14 16" key="2">
    <citation type="journal article" date="1999" name="Nucleic Acids Res.">
        <title>The Drosophila poly(A)-binding protein II is ubiquitous throughout Drosophila development and has the same function in mRNA polyadenylation as its bovine homolog in vitro.</title>
        <authorList>
            <person name="Benoit B."/>
            <person name="Nemeth A."/>
            <person name="Aulner N."/>
            <person name="Kuhn U."/>
            <person name="Simonelig M."/>
            <person name="Wahle E."/>
            <person name="Bourbon H.-M."/>
        </authorList>
    </citation>
    <scope>NUCLEOTIDE SEQUENCE [GENOMIC DNA]</scope>
    <scope>FUNCTION</scope>
    <scope>SUBCELLULAR LOCATION</scope>
    <scope>TISSUE SPECIFICITY</scope>
    <scope>DEVELOPMENTAL STAGE</scope>
    <source>
        <strain evidence="16">Oregon-R</strain>
    </source>
</reference>
<reference key="3">
    <citation type="journal article" date="2000" name="Science">
        <title>The genome sequence of Drosophila melanogaster.</title>
        <authorList>
            <person name="Adams M.D."/>
            <person name="Celniker S.E."/>
            <person name="Holt R.A."/>
            <person name="Evans C.A."/>
            <person name="Gocayne J.D."/>
            <person name="Amanatides P.G."/>
            <person name="Scherer S.E."/>
            <person name="Li P.W."/>
            <person name="Hoskins R.A."/>
            <person name="Galle R.F."/>
            <person name="George R.A."/>
            <person name="Lewis S.E."/>
            <person name="Richards S."/>
            <person name="Ashburner M."/>
            <person name="Henderson S.N."/>
            <person name="Sutton G.G."/>
            <person name="Wortman J.R."/>
            <person name="Yandell M.D."/>
            <person name="Zhang Q."/>
            <person name="Chen L.X."/>
            <person name="Brandon R.C."/>
            <person name="Rogers Y.-H.C."/>
            <person name="Blazej R.G."/>
            <person name="Champe M."/>
            <person name="Pfeiffer B.D."/>
            <person name="Wan K.H."/>
            <person name="Doyle C."/>
            <person name="Baxter E.G."/>
            <person name="Helt G."/>
            <person name="Nelson C.R."/>
            <person name="Miklos G.L.G."/>
            <person name="Abril J.F."/>
            <person name="Agbayani A."/>
            <person name="An H.-J."/>
            <person name="Andrews-Pfannkoch C."/>
            <person name="Baldwin D."/>
            <person name="Ballew R.M."/>
            <person name="Basu A."/>
            <person name="Baxendale J."/>
            <person name="Bayraktaroglu L."/>
            <person name="Beasley E.M."/>
            <person name="Beeson K.Y."/>
            <person name="Benos P.V."/>
            <person name="Berman B.P."/>
            <person name="Bhandari D."/>
            <person name="Bolshakov S."/>
            <person name="Borkova D."/>
            <person name="Botchan M.R."/>
            <person name="Bouck J."/>
            <person name="Brokstein P."/>
            <person name="Brottier P."/>
            <person name="Burtis K.C."/>
            <person name="Busam D.A."/>
            <person name="Butler H."/>
            <person name="Cadieu E."/>
            <person name="Center A."/>
            <person name="Chandra I."/>
            <person name="Cherry J.M."/>
            <person name="Cawley S."/>
            <person name="Dahlke C."/>
            <person name="Davenport L.B."/>
            <person name="Davies P."/>
            <person name="de Pablos B."/>
            <person name="Delcher A."/>
            <person name="Deng Z."/>
            <person name="Mays A.D."/>
            <person name="Dew I."/>
            <person name="Dietz S.M."/>
            <person name="Dodson K."/>
            <person name="Doup L.E."/>
            <person name="Downes M."/>
            <person name="Dugan-Rocha S."/>
            <person name="Dunkov B.C."/>
            <person name="Dunn P."/>
            <person name="Durbin K.J."/>
            <person name="Evangelista C.C."/>
            <person name="Ferraz C."/>
            <person name="Ferriera S."/>
            <person name="Fleischmann W."/>
            <person name="Fosler C."/>
            <person name="Gabrielian A.E."/>
            <person name="Garg N.S."/>
            <person name="Gelbart W.M."/>
            <person name="Glasser K."/>
            <person name="Glodek A."/>
            <person name="Gong F."/>
            <person name="Gorrell J.H."/>
            <person name="Gu Z."/>
            <person name="Guan P."/>
            <person name="Harris M."/>
            <person name="Harris N.L."/>
            <person name="Harvey D.A."/>
            <person name="Heiman T.J."/>
            <person name="Hernandez J.R."/>
            <person name="Houck J."/>
            <person name="Hostin D."/>
            <person name="Houston K.A."/>
            <person name="Howland T.J."/>
            <person name="Wei M.-H."/>
            <person name="Ibegwam C."/>
            <person name="Jalali M."/>
            <person name="Kalush F."/>
            <person name="Karpen G.H."/>
            <person name="Ke Z."/>
            <person name="Kennison J.A."/>
            <person name="Ketchum K.A."/>
            <person name="Kimmel B.E."/>
            <person name="Kodira C.D."/>
            <person name="Kraft C.L."/>
            <person name="Kravitz S."/>
            <person name="Kulp D."/>
            <person name="Lai Z."/>
            <person name="Lasko P."/>
            <person name="Lei Y."/>
            <person name="Levitsky A.A."/>
            <person name="Li J.H."/>
            <person name="Li Z."/>
            <person name="Liang Y."/>
            <person name="Lin X."/>
            <person name="Liu X."/>
            <person name="Mattei B."/>
            <person name="McIntosh T.C."/>
            <person name="McLeod M.P."/>
            <person name="McPherson D."/>
            <person name="Merkulov G."/>
            <person name="Milshina N.V."/>
            <person name="Mobarry C."/>
            <person name="Morris J."/>
            <person name="Moshrefi A."/>
            <person name="Mount S.M."/>
            <person name="Moy M."/>
            <person name="Murphy B."/>
            <person name="Murphy L."/>
            <person name="Muzny D.M."/>
            <person name="Nelson D.L."/>
            <person name="Nelson D.R."/>
            <person name="Nelson K.A."/>
            <person name="Nixon K."/>
            <person name="Nusskern D.R."/>
            <person name="Pacleb J.M."/>
            <person name="Palazzolo M."/>
            <person name="Pittman G.S."/>
            <person name="Pan S."/>
            <person name="Pollard J."/>
            <person name="Puri V."/>
            <person name="Reese M.G."/>
            <person name="Reinert K."/>
            <person name="Remington K."/>
            <person name="Saunders R.D.C."/>
            <person name="Scheeler F."/>
            <person name="Shen H."/>
            <person name="Shue B.C."/>
            <person name="Siden-Kiamos I."/>
            <person name="Simpson M."/>
            <person name="Skupski M.P."/>
            <person name="Smith T.J."/>
            <person name="Spier E."/>
            <person name="Spradling A.C."/>
            <person name="Stapleton M."/>
            <person name="Strong R."/>
            <person name="Sun E."/>
            <person name="Svirskas R."/>
            <person name="Tector C."/>
            <person name="Turner R."/>
            <person name="Venter E."/>
            <person name="Wang A.H."/>
            <person name="Wang X."/>
            <person name="Wang Z.-Y."/>
            <person name="Wassarman D.A."/>
            <person name="Weinstock G.M."/>
            <person name="Weissenbach J."/>
            <person name="Williams S.M."/>
            <person name="Woodage T."/>
            <person name="Worley K.C."/>
            <person name="Wu D."/>
            <person name="Yang S."/>
            <person name="Yao Q.A."/>
            <person name="Ye J."/>
            <person name="Yeh R.-F."/>
            <person name="Zaveri J.S."/>
            <person name="Zhan M."/>
            <person name="Zhang G."/>
            <person name="Zhao Q."/>
            <person name="Zheng L."/>
            <person name="Zheng X.H."/>
            <person name="Zhong F.N."/>
            <person name="Zhong W."/>
            <person name="Zhou X."/>
            <person name="Zhu S.C."/>
            <person name="Zhu X."/>
            <person name="Smith H.O."/>
            <person name="Gibbs R.A."/>
            <person name="Myers E.W."/>
            <person name="Rubin G.M."/>
            <person name="Venter J.C."/>
        </authorList>
    </citation>
    <scope>NUCLEOTIDE SEQUENCE [LARGE SCALE GENOMIC DNA]</scope>
    <source>
        <strain evidence="6">Berkeley</strain>
    </source>
</reference>
<reference evidence="14" key="4">
    <citation type="journal article" date="2002" name="Genome Biol.">
        <title>Annotation of the Drosophila melanogaster euchromatic genome: a systematic review.</title>
        <authorList>
            <person name="Misra S."/>
            <person name="Crosby M.A."/>
            <person name="Mungall C.J."/>
            <person name="Matthews B.B."/>
            <person name="Campbell K.S."/>
            <person name="Hradecky P."/>
            <person name="Huang Y."/>
            <person name="Kaminker J.S."/>
            <person name="Millburn G.H."/>
            <person name="Prochnik S.E."/>
            <person name="Smith C.D."/>
            <person name="Tupy J.L."/>
            <person name="Whitfield E.J."/>
            <person name="Bayraktaroglu L."/>
            <person name="Berman B.P."/>
            <person name="Bettencourt B.R."/>
            <person name="Celniker S.E."/>
            <person name="de Grey A.D.N.J."/>
            <person name="Drysdale R.A."/>
            <person name="Harris N.L."/>
            <person name="Richter J."/>
            <person name="Russo S."/>
            <person name="Schroeder A.J."/>
            <person name="Shu S.Q."/>
            <person name="Stapleton M."/>
            <person name="Yamada C."/>
            <person name="Ashburner M."/>
            <person name="Gelbart W.M."/>
            <person name="Rubin G.M."/>
            <person name="Lewis S.E."/>
        </authorList>
    </citation>
    <scope>GENOME REANNOTATION</scope>
    <source>
        <strain>Berkeley</strain>
    </source>
</reference>
<reference evidence="17" key="5">
    <citation type="journal article" date="2002" name="Genome Biol.">
        <title>A Drosophila full-length cDNA resource.</title>
        <authorList>
            <person name="Stapleton M."/>
            <person name="Carlson J.W."/>
            <person name="Brokstein P."/>
            <person name="Yu C."/>
            <person name="Champe M."/>
            <person name="George R.A."/>
            <person name="Guarin H."/>
            <person name="Kronmiller B."/>
            <person name="Pacleb J.M."/>
            <person name="Park S."/>
            <person name="Wan K.H."/>
            <person name="Rubin G.M."/>
            <person name="Celniker S.E."/>
        </authorList>
    </citation>
    <scope>NUCLEOTIDE SEQUENCE [LARGE SCALE MRNA]</scope>
    <source>
        <strain evidence="17">Berkeley</strain>
        <tissue evidence="7">Embryo</tissue>
    </source>
</reference>
<reference key="6">
    <citation type="journal article" date="2009" name="J. Cell Biol.">
        <title>A conserved CCCH-type zinc finger protein regulates mRNA nuclear adenylation and export.</title>
        <authorList>
            <person name="Hurt J.A."/>
            <person name="Obar R.A."/>
            <person name="Zhai B."/>
            <person name="Farny N.G."/>
            <person name="Gygi S.P."/>
            <person name="Silver P.A."/>
        </authorList>
    </citation>
    <scope>INTERACTION WITH ZC3H3</scope>
</reference>
<reference key="7">
    <citation type="journal article" date="2010" name="PLoS Genet.">
        <title>Identification of genes required for neural-specific glycosylation using functional genomics.</title>
        <authorList>
            <person name="Yamamoto-Hino M."/>
            <person name="Kanie Y."/>
            <person name="Awano W."/>
            <person name="Aoki-Kinoshita K.F."/>
            <person name="Yano H."/>
            <person name="Nishihara S."/>
            <person name="Okano H."/>
            <person name="Ueda R."/>
            <person name="Kanie O."/>
            <person name="Goto S."/>
        </authorList>
    </citation>
    <scope>FUNCTION</scope>
    <scope>DISRUPTION PHENOTYPE</scope>
</reference>
<reference key="8">
    <citation type="journal article" date="2017" name="J. Genet. Genomics">
        <title>Regulators of alternative polyadenylation operate at the transition from mitosis to meiosis.</title>
        <authorList>
            <person name="Shan L."/>
            <person name="Wu C."/>
            <person name="Chen D."/>
            <person name="Hou L."/>
            <person name="Li X."/>
            <person name="Wang L."/>
            <person name="Chu X."/>
            <person name="Hou Y."/>
            <person name="Wang Z."/>
        </authorList>
    </citation>
    <scope>FUNCTION</scope>
    <scope>DISRUPTION PHENOTYPE</scope>
</reference>
<accession>Q7KNF2</accession>
<accession>A1Z7B1</accession>
<accession>Q27926</accession>
<accession>Q7JQ60</accession>
<organism evidence="19">
    <name type="scientific">Drosophila melanogaster</name>
    <name type="common">Fruit fly</name>
    <dbReference type="NCBI Taxonomy" id="7227"/>
    <lineage>
        <taxon>Eukaryota</taxon>
        <taxon>Metazoa</taxon>
        <taxon>Ecdysozoa</taxon>
        <taxon>Arthropoda</taxon>
        <taxon>Hexapoda</taxon>
        <taxon>Insecta</taxon>
        <taxon>Pterygota</taxon>
        <taxon>Neoptera</taxon>
        <taxon>Endopterygota</taxon>
        <taxon>Diptera</taxon>
        <taxon>Brachycera</taxon>
        <taxon>Muscomorpha</taxon>
        <taxon>Ephydroidea</taxon>
        <taxon>Drosophilidae</taxon>
        <taxon>Drosophila</taxon>
        <taxon>Sophophora</taxon>
    </lineage>
</organism>